<geneLocation type="chloroplast"/>
<protein>
    <recommendedName>
        <fullName evidence="2">Large ribosomal subunit protein uL2cy</fullName>
    </recommendedName>
    <alternativeName>
        <fullName evidence="4">50S ribosomal protein L2-B, chloroplastic</fullName>
    </alternativeName>
</protein>
<evidence type="ECO:0000250" key="1"/>
<evidence type="ECO:0000255" key="2">
    <source>
        <dbReference type="HAMAP-Rule" id="MF_01320"/>
    </source>
</evidence>
<evidence type="ECO:0000256" key="3">
    <source>
        <dbReference type="SAM" id="MobiDB-lite"/>
    </source>
</evidence>
<evidence type="ECO:0000305" key="4"/>
<sequence length="274" mass="30074">MAIHLYKTSTPSTRNGTVDSQVKSNPRNNLIYGQRRCGKGRNARGIITARHRGGGHKRLYRKIDFRRNEKDIYGRIVTIEYDPNRNAYICLIHYGDGEKRYILHPRGAIIGDTIVSGTEVPIKMGNALPLTDMPLGTAIHNIEITLGKGGQLARAAGAVPKLIAKEGKSATLKLPSGEVRLISKNCSATVGQVGNVGVNQKSLGRAGSKRWLGKRPVVRGVVMNPVNHPHGGGEGRAPIGRKKPTTPWGYPALGRRSRKRNKYSDNLILRRRSK</sequence>
<feature type="chain" id="PRO_0000129667" description="Large ribosomal subunit protein uL2cy">
    <location>
        <begin position="1"/>
        <end position="274"/>
    </location>
</feature>
<feature type="region of interest" description="Disordered" evidence="3">
    <location>
        <begin position="1"/>
        <end position="25"/>
    </location>
</feature>
<feature type="region of interest" description="Disordered" evidence="3">
    <location>
        <begin position="223"/>
        <end position="274"/>
    </location>
</feature>
<feature type="compositionally biased region" description="Polar residues" evidence="3">
    <location>
        <begin position="7"/>
        <end position="25"/>
    </location>
</feature>
<dbReference type="EMBL" id="AJ316582">
    <property type="protein sequence ID" value="CAC88110.1"/>
    <property type="molecule type" value="Genomic_DNA"/>
</dbReference>
<dbReference type="SMR" id="Q8S8U0"/>
<dbReference type="GO" id="GO:0009507">
    <property type="term" value="C:chloroplast"/>
    <property type="evidence" value="ECO:0007669"/>
    <property type="project" value="UniProtKB-SubCell"/>
</dbReference>
<dbReference type="GO" id="GO:0005762">
    <property type="term" value="C:mitochondrial large ribosomal subunit"/>
    <property type="evidence" value="ECO:0007669"/>
    <property type="project" value="TreeGrafter"/>
</dbReference>
<dbReference type="GO" id="GO:0019843">
    <property type="term" value="F:rRNA binding"/>
    <property type="evidence" value="ECO:0007669"/>
    <property type="project" value="UniProtKB-UniRule"/>
</dbReference>
<dbReference type="GO" id="GO:0003735">
    <property type="term" value="F:structural constituent of ribosome"/>
    <property type="evidence" value="ECO:0007669"/>
    <property type="project" value="InterPro"/>
</dbReference>
<dbReference type="GO" id="GO:0016740">
    <property type="term" value="F:transferase activity"/>
    <property type="evidence" value="ECO:0007669"/>
    <property type="project" value="InterPro"/>
</dbReference>
<dbReference type="GO" id="GO:0032543">
    <property type="term" value="P:mitochondrial translation"/>
    <property type="evidence" value="ECO:0007669"/>
    <property type="project" value="TreeGrafter"/>
</dbReference>
<dbReference type="FunFam" id="4.10.950.10:FF:000001">
    <property type="entry name" value="50S ribosomal protein L2"/>
    <property type="match status" value="1"/>
</dbReference>
<dbReference type="FunFam" id="2.30.30.30:FF:000008">
    <property type="entry name" value="50S ribosomal protein L2, chloroplastic"/>
    <property type="match status" value="1"/>
</dbReference>
<dbReference type="FunFam" id="2.40.50.140:FF:000029">
    <property type="entry name" value="50S ribosomal protein L2, chloroplastic"/>
    <property type="match status" value="1"/>
</dbReference>
<dbReference type="Gene3D" id="2.30.30.30">
    <property type="match status" value="1"/>
</dbReference>
<dbReference type="Gene3D" id="2.40.50.140">
    <property type="entry name" value="Nucleic acid-binding proteins"/>
    <property type="match status" value="1"/>
</dbReference>
<dbReference type="Gene3D" id="4.10.950.10">
    <property type="entry name" value="Ribosomal protein L2, domain 3"/>
    <property type="match status" value="1"/>
</dbReference>
<dbReference type="HAMAP" id="MF_01320_B">
    <property type="entry name" value="Ribosomal_uL2_B"/>
    <property type="match status" value="1"/>
</dbReference>
<dbReference type="InterPro" id="IPR012340">
    <property type="entry name" value="NA-bd_OB-fold"/>
</dbReference>
<dbReference type="InterPro" id="IPR014722">
    <property type="entry name" value="Rib_uL2_dom2"/>
</dbReference>
<dbReference type="InterPro" id="IPR002171">
    <property type="entry name" value="Ribosomal_uL2"/>
</dbReference>
<dbReference type="InterPro" id="IPR005880">
    <property type="entry name" value="Ribosomal_uL2_bac/org-type"/>
</dbReference>
<dbReference type="InterPro" id="IPR022669">
    <property type="entry name" value="Ribosomal_uL2_C"/>
</dbReference>
<dbReference type="InterPro" id="IPR014726">
    <property type="entry name" value="Ribosomal_uL2_dom3"/>
</dbReference>
<dbReference type="InterPro" id="IPR022666">
    <property type="entry name" value="Ribosomal_uL2_RNA-bd_dom"/>
</dbReference>
<dbReference type="InterPro" id="IPR008991">
    <property type="entry name" value="Translation_prot_SH3-like_sf"/>
</dbReference>
<dbReference type="NCBIfam" id="TIGR01171">
    <property type="entry name" value="rplB_bact"/>
    <property type="match status" value="1"/>
</dbReference>
<dbReference type="PANTHER" id="PTHR13691:SF5">
    <property type="entry name" value="LARGE RIBOSOMAL SUBUNIT PROTEIN UL2M"/>
    <property type="match status" value="1"/>
</dbReference>
<dbReference type="PANTHER" id="PTHR13691">
    <property type="entry name" value="RIBOSOMAL PROTEIN L2"/>
    <property type="match status" value="1"/>
</dbReference>
<dbReference type="Pfam" id="PF00181">
    <property type="entry name" value="Ribosomal_L2"/>
    <property type="match status" value="1"/>
</dbReference>
<dbReference type="Pfam" id="PF03947">
    <property type="entry name" value="Ribosomal_L2_C"/>
    <property type="match status" value="1"/>
</dbReference>
<dbReference type="PIRSF" id="PIRSF002158">
    <property type="entry name" value="Ribosomal_L2"/>
    <property type="match status" value="1"/>
</dbReference>
<dbReference type="SMART" id="SM01383">
    <property type="entry name" value="Ribosomal_L2"/>
    <property type="match status" value="1"/>
</dbReference>
<dbReference type="SMART" id="SM01382">
    <property type="entry name" value="Ribosomal_L2_C"/>
    <property type="match status" value="1"/>
</dbReference>
<dbReference type="SUPFAM" id="SSF50249">
    <property type="entry name" value="Nucleic acid-binding proteins"/>
    <property type="match status" value="1"/>
</dbReference>
<dbReference type="SUPFAM" id="SSF50104">
    <property type="entry name" value="Translation proteins SH3-like domain"/>
    <property type="match status" value="1"/>
</dbReference>
<proteinExistence type="inferred from homology"/>
<name>RK2B_ATRBE</name>
<keyword id="KW-0150">Chloroplast</keyword>
<keyword id="KW-0934">Plastid</keyword>
<keyword id="KW-0687">Ribonucleoprotein</keyword>
<keyword id="KW-0689">Ribosomal protein</keyword>
<organism>
    <name type="scientific">Atropa belladonna</name>
    <name type="common">Belladonna</name>
    <name type="synonym">Deadly nightshade</name>
    <dbReference type="NCBI Taxonomy" id="33113"/>
    <lineage>
        <taxon>Eukaryota</taxon>
        <taxon>Viridiplantae</taxon>
        <taxon>Streptophyta</taxon>
        <taxon>Embryophyta</taxon>
        <taxon>Tracheophyta</taxon>
        <taxon>Spermatophyta</taxon>
        <taxon>Magnoliopsida</taxon>
        <taxon>eudicotyledons</taxon>
        <taxon>Gunneridae</taxon>
        <taxon>Pentapetalae</taxon>
        <taxon>asterids</taxon>
        <taxon>lamiids</taxon>
        <taxon>Solanales</taxon>
        <taxon>Solanaceae</taxon>
        <taxon>Solanoideae</taxon>
        <taxon>Hyoscyameae</taxon>
        <taxon>Atropa</taxon>
    </lineage>
</organism>
<reference key="1">
    <citation type="journal article" date="2002" name="Mol. Biol. Evol.">
        <title>The plastid chromosome of Atropa belladonna and its comparison with that of Nicotiana tabacum: the role of RNA editing in generating divergence in the process of plant speciation.</title>
        <authorList>
            <person name="Schmitz-Linneweber C."/>
            <person name="Regel R."/>
            <person name="Du T.G."/>
            <person name="Hupfer H."/>
            <person name="Herrmann R.G."/>
            <person name="Maier R.M."/>
        </authorList>
    </citation>
    <scope>NUCLEOTIDE SEQUENCE [LARGE SCALE GENOMIC DNA]</scope>
    <source>
        <strain>cv. Ab5p(kan)</strain>
    </source>
</reference>
<comment type="subunit">
    <text evidence="1">Part of the 50S ribosomal subunit.</text>
</comment>
<comment type="subcellular location">
    <subcellularLocation>
        <location>Plastid</location>
        <location>Chloroplast</location>
    </subcellularLocation>
</comment>
<comment type="similarity">
    <text evidence="4">Belongs to the universal ribosomal protein uL2 family.</text>
</comment>
<comment type="caution">
    <text evidence="4">There is 1 gene for this protein in each of the chloroplast inverted repeats; while they are usually identical, in this organism they are not. The other copy is AC Q8S8V3.</text>
</comment>
<gene>
    <name type="primary">rpl2-B</name>
</gene>
<accession>Q8S8U0</accession>